<feature type="chain" id="PRO_0000088297" description="3-phosphoshikimate 1-carboxyvinyltransferase">
    <location>
        <begin position="1"/>
        <end position="433"/>
    </location>
</feature>
<feature type="active site" description="Proton acceptor" evidence="1">
    <location>
        <position position="317"/>
    </location>
</feature>
<feature type="binding site" evidence="1">
    <location>
        <position position="23"/>
    </location>
    <ligand>
        <name>3-phosphoshikimate</name>
        <dbReference type="ChEBI" id="CHEBI:145989"/>
    </ligand>
</feature>
<feature type="binding site" evidence="1">
    <location>
        <position position="23"/>
    </location>
    <ligand>
        <name>phosphoenolpyruvate</name>
        <dbReference type="ChEBI" id="CHEBI:58702"/>
    </ligand>
</feature>
<feature type="binding site" evidence="1">
    <location>
        <position position="24"/>
    </location>
    <ligand>
        <name>3-phosphoshikimate</name>
        <dbReference type="ChEBI" id="CHEBI:145989"/>
    </ligand>
</feature>
<feature type="binding site" evidence="1">
    <location>
        <position position="28"/>
    </location>
    <ligand>
        <name>3-phosphoshikimate</name>
        <dbReference type="ChEBI" id="CHEBI:145989"/>
    </ligand>
</feature>
<feature type="binding site" evidence="1">
    <location>
        <position position="95"/>
    </location>
    <ligand>
        <name>phosphoenolpyruvate</name>
        <dbReference type="ChEBI" id="CHEBI:58702"/>
    </ligand>
</feature>
<feature type="binding site" evidence="1">
    <location>
        <position position="123"/>
    </location>
    <ligand>
        <name>phosphoenolpyruvate</name>
        <dbReference type="ChEBI" id="CHEBI:58702"/>
    </ligand>
</feature>
<feature type="binding site" evidence="1">
    <location>
        <position position="167"/>
    </location>
    <ligand>
        <name>3-phosphoshikimate</name>
        <dbReference type="ChEBI" id="CHEBI:145989"/>
    </ligand>
</feature>
<feature type="binding site" evidence="1">
    <location>
        <position position="169"/>
    </location>
    <ligand>
        <name>3-phosphoshikimate</name>
        <dbReference type="ChEBI" id="CHEBI:145989"/>
    </ligand>
</feature>
<feature type="binding site" evidence="1">
    <location>
        <position position="169"/>
    </location>
    <ligand>
        <name>phosphoenolpyruvate</name>
        <dbReference type="ChEBI" id="CHEBI:58702"/>
    </ligand>
</feature>
<feature type="binding site" evidence="1">
    <location>
        <position position="317"/>
    </location>
    <ligand>
        <name>3-phosphoshikimate</name>
        <dbReference type="ChEBI" id="CHEBI:145989"/>
    </ligand>
</feature>
<feature type="binding site" evidence="1">
    <location>
        <position position="344"/>
    </location>
    <ligand>
        <name>3-phosphoshikimate</name>
        <dbReference type="ChEBI" id="CHEBI:145989"/>
    </ligand>
</feature>
<feature type="binding site" evidence="1">
    <location>
        <position position="348"/>
    </location>
    <ligand>
        <name>phosphoenolpyruvate</name>
        <dbReference type="ChEBI" id="CHEBI:58702"/>
    </ligand>
</feature>
<feature type="binding site" evidence="1">
    <location>
        <position position="390"/>
    </location>
    <ligand>
        <name>phosphoenolpyruvate</name>
        <dbReference type="ChEBI" id="CHEBI:58702"/>
    </ligand>
</feature>
<organism>
    <name type="scientific">Staphylococcus epidermidis (strain ATCC 12228 / FDA PCI 1200)</name>
    <dbReference type="NCBI Taxonomy" id="176280"/>
    <lineage>
        <taxon>Bacteria</taxon>
        <taxon>Bacillati</taxon>
        <taxon>Bacillota</taxon>
        <taxon>Bacilli</taxon>
        <taxon>Bacillales</taxon>
        <taxon>Staphylococcaceae</taxon>
        <taxon>Staphylococcus</taxon>
    </lineage>
</organism>
<gene>
    <name evidence="1" type="primary">aroA</name>
    <name type="ordered locus">SE_1153</name>
</gene>
<protein>
    <recommendedName>
        <fullName evidence="1">3-phosphoshikimate 1-carboxyvinyltransferase</fullName>
        <ecNumber evidence="1">2.5.1.19</ecNumber>
    </recommendedName>
    <alternativeName>
        <fullName evidence="1">5-enolpyruvylshikimate-3-phosphate synthase</fullName>
        <shortName evidence="1">EPSP synthase</shortName>
        <shortName evidence="1">EPSPS</shortName>
    </alternativeName>
</protein>
<dbReference type="EC" id="2.5.1.19" evidence="1"/>
<dbReference type="EMBL" id="AE015929">
    <property type="protein sequence ID" value="AAO04750.1"/>
    <property type="molecule type" value="Genomic_DNA"/>
</dbReference>
<dbReference type="RefSeq" id="NP_764708.1">
    <property type="nucleotide sequence ID" value="NC_004461.1"/>
</dbReference>
<dbReference type="RefSeq" id="WP_001831249.1">
    <property type="nucleotide sequence ID" value="NZ_WBME01000006.1"/>
</dbReference>
<dbReference type="SMR" id="Q8CSI1"/>
<dbReference type="GeneID" id="50018725"/>
<dbReference type="KEGG" id="sep:SE_1153"/>
<dbReference type="PATRIC" id="fig|176280.10.peg.1125"/>
<dbReference type="eggNOG" id="COG0128">
    <property type="taxonomic scope" value="Bacteria"/>
</dbReference>
<dbReference type="HOGENOM" id="CLU_024321_0_1_9"/>
<dbReference type="OrthoDB" id="9809920at2"/>
<dbReference type="UniPathway" id="UPA00053">
    <property type="reaction ID" value="UER00089"/>
</dbReference>
<dbReference type="Proteomes" id="UP000001411">
    <property type="component" value="Chromosome"/>
</dbReference>
<dbReference type="GO" id="GO:0005737">
    <property type="term" value="C:cytoplasm"/>
    <property type="evidence" value="ECO:0007669"/>
    <property type="project" value="UniProtKB-SubCell"/>
</dbReference>
<dbReference type="GO" id="GO:0003866">
    <property type="term" value="F:3-phosphoshikimate 1-carboxyvinyltransferase activity"/>
    <property type="evidence" value="ECO:0007669"/>
    <property type="project" value="UniProtKB-UniRule"/>
</dbReference>
<dbReference type="GO" id="GO:0008652">
    <property type="term" value="P:amino acid biosynthetic process"/>
    <property type="evidence" value="ECO:0007669"/>
    <property type="project" value="UniProtKB-KW"/>
</dbReference>
<dbReference type="GO" id="GO:0009073">
    <property type="term" value="P:aromatic amino acid family biosynthetic process"/>
    <property type="evidence" value="ECO:0007669"/>
    <property type="project" value="UniProtKB-KW"/>
</dbReference>
<dbReference type="GO" id="GO:0009423">
    <property type="term" value="P:chorismate biosynthetic process"/>
    <property type="evidence" value="ECO:0007669"/>
    <property type="project" value="UniProtKB-UniRule"/>
</dbReference>
<dbReference type="CDD" id="cd01556">
    <property type="entry name" value="EPSP_synthase"/>
    <property type="match status" value="1"/>
</dbReference>
<dbReference type="FunFam" id="3.65.10.10:FF:000005">
    <property type="entry name" value="3-phosphoshikimate 1-carboxyvinyltransferase"/>
    <property type="match status" value="1"/>
</dbReference>
<dbReference type="FunFam" id="3.65.10.10:FF:000006">
    <property type="entry name" value="3-phosphoshikimate 1-carboxyvinyltransferase"/>
    <property type="match status" value="1"/>
</dbReference>
<dbReference type="Gene3D" id="3.65.10.10">
    <property type="entry name" value="Enolpyruvate transferase domain"/>
    <property type="match status" value="2"/>
</dbReference>
<dbReference type="HAMAP" id="MF_00210">
    <property type="entry name" value="EPSP_synth"/>
    <property type="match status" value="1"/>
</dbReference>
<dbReference type="InterPro" id="IPR001986">
    <property type="entry name" value="Enolpyruvate_Tfrase_dom"/>
</dbReference>
<dbReference type="InterPro" id="IPR036968">
    <property type="entry name" value="Enolpyruvate_Tfrase_sf"/>
</dbReference>
<dbReference type="InterPro" id="IPR006264">
    <property type="entry name" value="EPSP_synthase"/>
</dbReference>
<dbReference type="InterPro" id="IPR023193">
    <property type="entry name" value="EPSP_synthase_CS"/>
</dbReference>
<dbReference type="InterPro" id="IPR013792">
    <property type="entry name" value="RNA3'P_cycl/enolpyr_Trfase_a/b"/>
</dbReference>
<dbReference type="NCBIfam" id="TIGR01356">
    <property type="entry name" value="aroA"/>
    <property type="match status" value="1"/>
</dbReference>
<dbReference type="PANTHER" id="PTHR21090">
    <property type="entry name" value="AROM/DEHYDROQUINATE SYNTHASE"/>
    <property type="match status" value="1"/>
</dbReference>
<dbReference type="PANTHER" id="PTHR21090:SF5">
    <property type="entry name" value="PENTAFUNCTIONAL AROM POLYPEPTIDE"/>
    <property type="match status" value="1"/>
</dbReference>
<dbReference type="Pfam" id="PF00275">
    <property type="entry name" value="EPSP_synthase"/>
    <property type="match status" value="1"/>
</dbReference>
<dbReference type="PIRSF" id="PIRSF000505">
    <property type="entry name" value="EPSPS"/>
    <property type="match status" value="1"/>
</dbReference>
<dbReference type="SUPFAM" id="SSF55205">
    <property type="entry name" value="EPT/RTPC-like"/>
    <property type="match status" value="1"/>
</dbReference>
<dbReference type="PROSITE" id="PS00104">
    <property type="entry name" value="EPSP_SYNTHASE_1"/>
    <property type="match status" value="1"/>
</dbReference>
<dbReference type="PROSITE" id="PS00885">
    <property type="entry name" value="EPSP_SYNTHASE_2"/>
    <property type="match status" value="1"/>
</dbReference>
<reference key="1">
    <citation type="journal article" date="2003" name="Mol. Microbiol.">
        <title>Genome-based analysis of virulence genes in a non-biofilm-forming Staphylococcus epidermidis strain (ATCC 12228).</title>
        <authorList>
            <person name="Zhang Y.-Q."/>
            <person name="Ren S.-X."/>
            <person name="Li H.-L."/>
            <person name="Wang Y.-X."/>
            <person name="Fu G."/>
            <person name="Yang J."/>
            <person name="Qin Z.-Q."/>
            <person name="Miao Y.-G."/>
            <person name="Wang W.-Y."/>
            <person name="Chen R.-S."/>
            <person name="Shen Y."/>
            <person name="Chen Z."/>
            <person name="Yuan Z.-H."/>
            <person name="Zhao G.-P."/>
            <person name="Qu D."/>
            <person name="Danchin A."/>
            <person name="Wen Y.-M."/>
        </authorList>
    </citation>
    <scope>NUCLEOTIDE SEQUENCE [LARGE SCALE GENOMIC DNA]</scope>
    <source>
        <strain>ATCC 12228 / FDA PCI 1200</strain>
    </source>
</reference>
<accession>Q8CSI1</accession>
<name>AROA_STAES</name>
<sequence>MNNSEIININGPLKGEIEVPGDKSMTHRAIMLASLAKGISTIYEPLMGEDCRRTMDIFKLLGVTIEEQDNSIIINSPGYQNFITPHQVLYTGNSGTTTRLLAGLLSGLGIESVLSGDVSIGKRPMDRVMKPLLKMNANISGIDNNYTPLIIKPSTIKGINYQMEVASAQVKSAILLASLFSKEATTLTEFDVSRNHTETLFAHFNIPISIQGKTIQTIPYAIEHIQPRDFHVPGDISSAAFFIVAALITPGSDITIHNVGINPTRSGIIDIVKQMGGNIELSNVSKGAEPTASIHVKYTPNLNAVTIKGDLVPRAIDELPVIALLCTQASNSCIIKNAEELKVKETNRIDTTADMLNLLGFNLQPTHDGLIIHPSEFRSNATVDSQTDHRIGMMLAVASLLSSEPLKIEQFDAVNVSFPGFLPKLKLLENEGK</sequence>
<comment type="function">
    <text evidence="1">Catalyzes the transfer of the enolpyruvyl moiety of phosphoenolpyruvate (PEP) to the 5-hydroxyl of shikimate-3-phosphate (S3P) to produce enolpyruvyl shikimate-3-phosphate and inorganic phosphate.</text>
</comment>
<comment type="catalytic activity">
    <reaction evidence="1">
        <text>3-phosphoshikimate + phosphoenolpyruvate = 5-O-(1-carboxyvinyl)-3-phosphoshikimate + phosphate</text>
        <dbReference type="Rhea" id="RHEA:21256"/>
        <dbReference type="ChEBI" id="CHEBI:43474"/>
        <dbReference type="ChEBI" id="CHEBI:57701"/>
        <dbReference type="ChEBI" id="CHEBI:58702"/>
        <dbReference type="ChEBI" id="CHEBI:145989"/>
        <dbReference type="EC" id="2.5.1.19"/>
    </reaction>
    <physiologicalReaction direction="left-to-right" evidence="1">
        <dbReference type="Rhea" id="RHEA:21257"/>
    </physiologicalReaction>
</comment>
<comment type="pathway">
    <text evidence="1">Metabolic intermediate biosynthesis; chorismate biosynthesis; chorismate from D-erythrose 4-phosphate and phosphoenolpyruvate: step 6/7.</text>
</comment>
<comment type="subunit">
    <text evidence="1">Monomer.</text>
</comment>
<comment type="subcellular location">
    <subcellularLocation>
        <location evidence="1">Cytoplasm</location>
    </subcellularLocation>
</comment>
<comment type="similarity">
    <text evidence="1">Belongs to the EPSP synthase family.</text>
</comment>
<keyword id="KW-0028">Amino-acid biosynthesis</keyword>
<keyword id="KW-0057">Aromatic amino acid biosynthesis</keyword>
<keyword id="KW-0963">Cytoplasm</keyword>
<keyword id="KW-0808">Transferase</keyword>
<proteinExistence type="inferred from homology"/>
<evidence type="ECO:0000255" key="1">
    <source>
        <dbReference type="HAMAP-Rule" id="MF_00210"/>
    </source>
</evidence>